<name>CH36_CERCA</name>
<gene>
    <name type="primary">Cp36</name>
    <name type="synonym">S36</name>
</gene>
<accession>P17110</accession>
<keyword id="KW-0677">Repeat</keyword>
<keyword id="KW-0964">Secreted</keyword>
<keyword id="KW-0732">Signal</keyword>
<proteinExistence type="inferred from homology"/>
<protein>
    <recommendedName>
        <fullName>Chorion protein S36</fullName>
    </recommendedName>
</protein>
<organism>
    <name type="scientific">Ceratitis capitata</name>
    <name type="common">Mediterranean fruit fly</name>
    <name type="synonym">Tephritis capitata</name>
    <dbReference type="NCBI Taxonomy" id="7213"/>
    <lineage>
        <taxon>Eukaryota</taxon>
        <taxon>Metazoa</taxon>
        <taxon>Ecdysozoa</taxon>
        <taxon>Arthropoda</taxon>
        <taxon>Hexapoda</taxon>
        <taxon>Insecta</taxon>
        <taxon>Pterygota</taxon>
        <taxon>Neoptera</taxon>
        <taxon>Endopterygota</taxon>
        <taxon>Diptera</taxon>
        <taxon>Brachycera</taxon>
        <taxon>Muscomorpha</taxon>
        <taxon>Tephritoidea</taxon>
        <taxon>Tephritidae</taxon>
        <taxon>Ceratitis</taxon>
        <taxon>Ceratitis</taxon>
    </lineage>
</organism>
<sequence>MNCFLFTLFFVAAPLATASYGSSSGGGGGGSSYLSSASSNGLDELVQAAAGGAQQAGGTITPANAEIPVSPAEVARLNQVQAQLQALNSNPVYRNLKNSDAIAESLAESSLASKIRQGNINIVAPNVIDQGVYRSLLVPSGQNNHQVIATQPLPPIIVNQPALPPTQIGGGPAAVVKAAPVIYKIKPSVIYQQEVINKVPTPLSLNPVYVKVYKPGKKIDAPLVPGVQQNYQAPSYGGSSYSAPAASYEPAPAPSYSAAPAQSYNAAPAPSYSAAPAASYGAAPSASYDAAPAASYGAESSYGSPQSSSSYGSAPPASGY</sequence>
<feature type="signal peptide" evidence="2">
    <location>
        <begin position="1"/>
        <end position="18"/>
    </location>
</feature>
<feature type="chain" id="PRO_0000089628" description="Chorion protein S36">
    <location>
        <begin position="19"/>
        <end position="320"/>
    </location>
</feature>
<feature type="repeat" description="1">
    <location>
        <begin position="178"/>
        <end position="181"/>
    </location>
</feature>
<feature type="repeat" description="2">
    <location>
        <begin position="258"/>
        <end position="261"/>
    </location>
</feature>
<feature type="repeat" description="3">
    <location>
        <begin position="266"/>
        <end position="269"/>
    </location>
</feature>
<feature type="repeat" description="4">
    <location>
        <begin position="274"/>
        <end position="277"/>
    </location>
</feature>
<feature type="repeat" description="5">
    <location>
        <position position="290"/>
    </location>
</feature>
<feature type="region of interest" description="Disordered" evidence="3">
    <location>
        <begin position="259"/>
        <end position="320"/>
    </location>
</feature>
<comment type="function">
    <text evidence="1">Chorion membrane (egg shell) protein; plays a role in protecting the egg from the environment.</text>
</comment>
<comment type="subcellular location">
    <subcellularLocation>
        <location evidence="4">Secreted</location>
    </subcellularLocation>
</comment>
<comment type="domain">
    <text>The tetrapeptide (A-A-P-[AV]) repeats found throughout the protein are also present in many proteins constituting the protective envelope of other species.</text>
</comment>
<comment type="similarity">
    <text evidence="4">Belongs to the chorion protein S36 family.</text>
</comment>
<dbReference type="EMBL" id="X51342">
    <property type="protein sequence ID" value="CAA35723.1"/>
    <property type="molecule type" value="Genomic_DNA"/>
</dbReference>
<dbReference type="PIR" id="S09208">
    <property type="entry name" value="S09208"/>
</dbReference>
<dbReference type="EnsemblMetazoa" id="XM_004527379.2">
    <property type="protein sequence ID" value="XP_004527436.1"/>
    <property type="gene ID" value="LOC101461913"/>
</dbReference>
<dbReference type="GeneID" id="101461913"/>
<dbReference type="KEGG" id="ccat:101461913"/>
<dbReference type="CTD" id="31787"/>
<dbReference type="OrthoDB" id="8056482at2759"/>
<dbReference type="GO" id="GO:0005576">
    <property type="term" value="C:extracellular region"/>
    <property type="evidence" value="ECO:0007669"/>
    <property type="project" value="UniProtKB-SubCell"/>
</dbReference>
<dbReference type="InterPro" id="IPR008449">
    <property type="entry name" value="Chorion_S36/S28"/>
</dbReference>
<dbReference type="Pfam" id="PF05387">
    <property type="entry name" value="Chorion_3"/>
    <property type="match status" value="1"/>
</dbReference>
<evidence type="ECO:0000250" key="1"/>
<evidence type="ECO:0000255" key="2"/>
<evidence type="ECO:0000256" key="3">
    <source>
        <dbReference type="SAM" id="MobiDB-lite"/>
    </source>
</evidence>
<evidence type="ECO:0000305" key="4"/>
<reference key="1">
    <citation type="journal article" date="1990" name="Nucleic Acids Res.">
        <title>The chorion genes of the medfly, Ceratitis capitata, I: structural and regulatory conservation of the s36 gene relative to two Drosophila species.</title>
        <authorList>
            <person name="Konsolaki M."/>
            <person name="Komitopoulou K."/>
            <person name="Tolias P.P."/>
            <person name="King D.L."/>
            <person name="Swimmer C."/>
            <person name="Kafatos F.C."/>
        </authorList>
    </citation>
    <scope>NUCLEOTIDE SEQUENCE [GENOMIC DNA]</scope>
</reference>